<proteinExistence type="evidence at transcript level"/>
<gene>
    <name evidence="3" type="primary">fmr1-b</name>
</gene>
<name>FMR1B_XENLA</name>
<evidence type="ECO:0000250" key="1">
    <source>
        <dbReference type="UniProtKB" id="P35922"/>
    </source>
</evidence>
<evidence type="ECO:0000250" key="2">
    <source>
        <dbReference type="UniProtKB" id="P51113"/>
    </source>
</evidence>
<evidence type="ECO:0000250" key="3">
    <source>
        <dbReference type="UniProtKB" id="Q06787"/>
    </source>
</evidence>
<evidence type="ECO:0000255" key="4"/>
<evidence type="ECO:0000255" key="5">
    <source>
        <dbReference type="PROSITE-ProRule" id="PRU00117"/>
    </source>
</evidence>
<evidence type="ECO:0000255" key="6">
    <source>
        <dbReference type="PROSITE-ProRule" id="PRU00973"/>
    </source>
</evidence>
<evidence type="ECO:0000256" key="7">
    <source>
        <dbReference type="SAM" id="MobiDB-lite"/>
    </source>
</evidence>
<evidence type="ECO:0000305" key="8"/>
<evidence type="ECO:0000312" key="9">
    <source>
        <dbReference type="EMBL" id="AAI12953.1"/>
    </source>
</evidence>
<feature type="chain" id="PRO_0000245322" description="Fragile X messenger ribonucleoprotein 1 homolog B">
    <location>
        <begin position="1"/>
        <end position="564"/>
    </location>
</feature>
<feature type="domain" description="Agenet-like 1" evidence="6">
    <location>
        <begin position="4"/>
        <end position="50"/>
    </location>
</feature>
<feature type="domain" description="Agenet-like 2" evidence="6">
    <location>
        <begin position="63"/>
        <end position="115"/>
    </location>
</feature>
<feature type="domain" description="KH 1" evidence="5">
    <location>
        <begin position="222"/>
        <end position="251"/>
    </location>
</feature>
<feature type="domain" description="KH 2" evidence="5">
    <location>
        <begin position="285"/>
        <end position="314"/>
    </location>
</feature>
<feature type="region of interest" description="Disordered" evidence="7">
    <location>
        <begin position="377"/>
        <end position="510"/>
    </location>
</feature>
<feature type="region of interest" description="RNA-binding RGG-box" evidence="4">
    <location>
        <begin position="468"/>
        <end position="481"/>
    </location>
</feature>
<feature type="region of interest" description="Disordered" evidence="7">
    <location>
        <begin position="529"/>
        <end position="564"/>
    </location>
</feature>
<feature type="compositionally biased region" description="Low complexity" evidence="7">
    <location>
        <begin position="426"/>
        <end position="435"/>
    </location>
</feature>
<feature type="compositionally biased region" description="Gly residues" evidence="7">
    <location>
        <begin position="471"/>
        <end position="483"/>
    </location>
</feature>
<feature type="compositionally biased region" description="Basic and acidic residues" evidence="7">
    <location>
        <begin position="484"/>
        <end position="505"/>
    </location>
</feature>
<feature type="compositionally biased region" description="Basic and acidic residues" evidence="7">
    <location>
        <begin position="535"/>
        <end position="552"/>
    </location>
</feature>
<protein>
    <recommendedName>
        <fullName evidence="3">Fragile X messenger ribonucleoprotein 1 homolog B</fullName>
    </recommendedName>
    <alternativeName>
        <fullName evidence="8">xFMR1-B</fullName>
    </alternativeName>
</protein>
<organism>
    <name type="scientific">Xenopus laevis</name>
    <name type="common">African clawed frog</name>
    <dbReference type="NCBI Taxonomy" id="8355"/>
    <lineage>
        <taxon>Eukaryota</taxon>
        <taxon>Metazoa</taxon>
        <taxon>Chordata</taxon>
        <taxon>Craniata</taxon>
        <taxon>Vertebrata</taxon>
        <taxon>Euteleostomi</taxon>
        <taxon>Amphibia</taxon>
        <taxon>Batrachia</taxon>
        <taxon>Anura</taxon>
        <taxon>Pipoidea</taxon>
        <taxon>Pipidae</taxon>
        <taxon>Xenopodinae</taxon>
        <taxon>Xenopus</taxon>
        <taxon>Xenopus</taxon>
    </lineage>
</organism>
<accession>Q2KHP9</accession>
<dbReference type="EMBL" id="BC112952">
    <property type="protein sequence ID" value="AAI12953.1"/>
    <property type="molecule type" value="mRNA"/>
</dbReference>
<dbReference type="RefSeq" id="NP_001089964.1">
    <property type="nucleotide sequence ID" value="NM_001096495.1"/>
</dbReference>
<dbReference type="SMR" id="Q2KHP9"/>
<dbReference type="DNASU" id="735034"/>
<dbReference type="GeneID" id="735034"/>
<dbReference type="KEGG" id="xla:735034"/>
<dbReference type="AGR" id="Xenbase:XB-GENE-977118"/>
<dbReference type="CTD" id="735034"/>
<dbReference type="Xenbase" id="XB-GENE-977118">
    <property type="gene designation" value="fmr1.S"/>
</dbReference>
<dbReference type="OMA" id="DEETHYF"/>
<dbReference type="OrthoDB" id="424249at2759"/>
<dbReference type="Proteomes" id="UP000186698">
    <property type="component" value="Chromosome 8S"/>
</dbReference>
<dbReference type="Bgee" id="735034">
    <property type="expression patterns" value="Expressed in testis and 19 other cell types or tissues"/>
</dbReference>
<dbReference type="GO" id="GO:0030424">
    <property type="term" value="C:axon"/>
    <property type="evidence" value="ECO:0000250"/>
    <property type="project" value="UniProtKB"/>
</dbReference>
<dbReference type="GO" id="GO:0043679">
    <property type="term" value="C:axon terminus"/>
    <property type="evidence" value="ECO:0000250"/>
    <property type="project" value="UniProtKB"/>
</dbReference>
<dbReference type="GO" id="GO:0042995">
    <property type="term" value="C:cell projection"/>
    <property type="evidence" value="ECO:0000250"/>
    <property type="project" value="UniProtKB"/>
</dbReference>
<dbReference type="GO" id="GO:0010369">
    <property type="term" value="C:chromocenter"/>
    <property type="evidence" value="ECO:0000250"/>
    <property type="project" value="UniProtKB"/>
</dbReference>
<dbReference type="GO" id="GO:0005694">
    <property type="term" value="C:chromosome"/>
    <property type="evidence" value="ECO:0000250"/>
    <property type="project" value="UniProtKB"/>
</dbReference>
<dbReference type="GO" id="GO:0000775">
    <property type="term" value="C:chromosome, centromeric region"/>
    <property type="evidence" value="ECO:0007669"/>
    <property type="project" value="UniProtKB-SubCell"/>
</dbReference>
<dbReference type="GO" id="GO:0005737">
    <property type="term" value="C:cytoplasm"/>
    <property type="evidence" value="ECO:0000250"/>
    <property type="project" value="UniProtKB"/>
</dbReference>
<dbReference type="GO" id="GO:0036464">
    <property type="term" value="C:cytoplasmic ribonucleoprotein granule"/>
    <property type="evidence" value="ECO:0000250"/>
    <property type="project" value="UniProtKB"/>
</dbReference>
<dbReference type="GO" id="GO:0010494">
    <property type="term" value="C:cytoplasmic stress granule"/>
    <property type="evidence" value="ECO:0000250"/>
    <property type="project" value="UniProtKB"/>
</dbReference>
<dbReference type="GO" id="GO:0030425">
    <property type="term" value="C:dendrite"/>
    <property type="evidence" value="ECO:0000250"/>
    <property type="project" value="UniProtKB"/>
</dbReference>
<dbReference type="GO" id="GO:1902737">
    <property type="term" value="C:dendritic filopodium"/>
    <property type="evidence" value="ECO:0000250"/>
    <property type="project" value="UniProtKB"/>
</dbReference>
<dbReference type="GO" id="GO:0043197">
    <property type="term" value="C:dendritic spine"/>
    <property type="evidence" value="ECO:0000250"/>
    <property type="project" value="UniProtKB"/>
</dbReference>
<dbReference type="GO" id="GO:0032433">
    <property type="term" value="C:filopodium tip"/>
    <property type="evidence" value="ECO:0000250"/>
    <property type="project" value="UniProtKB"/>
</dbReference>
<dbReference type="GO" id="GO:0097386">
    <property type="term" value="C:glial cell projection"/>
    <property type="evidence" value="ECO:0000250"/>
    <property type="project" value="UniProtKB"/>
</dbReference>
<dbReference type="GO" id="GO:0030426">
    <property type="term" value="C:growth cone"/>
    <property type="evidence" value="ECO:0000250"/>
    <property type="project" value="UniProtKB"/>
</dbReference>
<dbReference type="GO" id="GO:1990812">
    <property type="term" value="C:growth cone filopodium"/>
    <property type="evidence" value="ECO:0000250"/>
    <property type="project" value="UniProtKB"/>
</dbReference>
<dbReference type="GO" id="GO:0043232">
    <property type="term" value="C:intracellular membraneless organelle"/>
    <property type="evidence" value="ECO:0000250"/>
    <property type="project" value="UniProtKB"/>
</dbReference>
<dbReference type="GO" id="GO:0043005">
    <property type="term" value="C:neuron projection"/>
    <property type="evidence" value="ECO:0000250"/>
    <property type="project" value="UniProtKB"/>
</dbReference>
<dbReference type="GO" id="GO:0071598">
    <property type="term" value="C:neuronal ribonucleoprotein granule"/>
    <property type="evidence" value="ECO:0000250"/>
    <property type="project" value="UniProtKB"/>
</dbReference>
<dbReference type="GO" id="GO:0005730">
    <property type="term" value="C:nucleolus"/>
    <property type="evidence" value="ECO:0000250"/>
    <property type="project" value="UniProtKB"/>
</dbReference>
<dbReference type="GO" id="GO:0005654">
    <property type="term" value="C:nucleoplasm"/>
    <property type="evidence" value="ECO:0000250"/>
    <property type="project" value="UniProtKB"/>
</dbReference>
<dbReference type="GO" id="GO:0005634">
    <property type="term" value="C:nucleus"/>
    <property type="evidence" value="ECO:0000250"/>
    <property type="project" value="UniProtKB"/>
</dbReference>
<dbReference type="GO" id="GO:0043204">
    <property type="term" value="C:perikaryon"/>
    <property type="evidence" value="ECO:0000250"/>
    <property type="project" value="UniProtKB"/>
</dbReference>
<dbReference type="GO" id="GO:0048471">
    <property type="term" value="C:perinuclear region of cytoplasm"/>
    <property type="evidence" value="ECO:0000250"/>
    <property type="project" value="UniProtKB"/>
</dbReference>
<dbReference type="GO" id="GO:0098794">
    <property type="term" value="C:postsynapse"/>
    <property type="evidence" value="ECO:0000250"/>
    <property type="project" value="UniProtKB"/>
</dbReference>
<dbReference type="GO" id="GO:0014069">
    <property type="term" value="C:postsynaptic density"/>
    <property type="evidence" value="ECO:0000250"/>
    <property type="project" value="UniProtKB"/>
</dbReference>
<dbReference type="GO" id="GO:0045211">
    <property type="term" value="C:postsynaptic membrane"/>
    <property type="evidence" value="ECO:0007669"/>
    <property type="project" value="UniProtKB-SubCell"/>
</dbReference>
<dbReference type="GO" id="GO:0098793">
    <property type="term" value="C:presynapse"/>
    <property type="evidence" value="ECO:0000250"/>
    <property type="project" value="UniProtKB"/>
</dbReference>
<dbReference type="GO" id="GO:0042734">
    <property type="term" value="C:presynaptic membrane"/>
    <property type="evidence" value="ECO:0007669"/>
    <property type="project" value="UniProtKB-SubCell"/>
</dbReference>
<dbReference type="GO" id="GO:1990904">
    <property type="term" value="C:ribonucleoprotein complex"/>
    <property type="evidence" value="ECO:0007669"/>
    <property type="project" value="UniProtKB-KW"/>
</dbReference>
<dbReference type="GO" id="GO:0045202">
    <property type="term" value="C:synapse"/>
    <property type="evidence" value="ECO:0000250"/>
    <property type="project" value="UniProtKB"/>
</dbReference>
<dbReference type="GO" id="GO:0003682">
    <property type="term" value="F:chromatin binding"/>
    <property type="evidence" value="ECO:0000250"/>
    <property type="project" value="UniProtKB"/>
</dbReference>
<dbReference type="GO" id="GO:0070840">
    <property type="term" value="F:dynein complex binding"/>
    <property type="evidence" value="ECO:0000250"/>
    <property type="project" value="UniProtKB"/>
</dbReference>
<dbReference type="GO" id="GO:0002151">
    <property type="term" value="F:G-quadruplex RNA binding"/>
    <property type="evidence" value="ECO:0000250"/>
    <property type="project" value="UniProtKB"/>
</dbReference>
<dbReference type="GO" id="GO:0140006">
    <property type="term" value="F:histone H3 reader activity"/>
    <property type="evidence" value="ECO:0000250"/>
    <property type="project" value="UniProtKB"/>
</dbReference>
<dbReference type="GO" id="GO:0008017">
    <property type="term" value="F:microtubule binding"/>
    <property type="evidence" value="ECO:0000250"/>
    <property type="project" value="UniProtKB"/>
</dbReference>
<dbReference type="GO" id="GO:0035198">
    <property type="term" value="F:miRNA binding"/>
    <property type="evidence" value="ECO:0000250"/>
    <property type="project" value="UniProtKB"/>
</dbReference>
<dbReference type="GO" id="GO:0140693">
    <property type="term" value="F:molecular condensate scaffold activity"/>
    <property type="evidence" value="ECO:0000250"/>
    <property type="project" value="UniProtKB"/>
</dbReference>
<dbReference type="GO" id="GO:0003730">
    <property type="term" value="F:mRNA 3'-UTR binding"/>
    <property type="evidence" value="ECO:0000250"/>
    <property type="project" value="UniProtKB"/>
</dbReference>
<dbReference type="GO" id="GO:0048027">
    <property type="term" value="F:mRNA 5'-UTR binding"/>
    <property type="evidence" value="ECO:0000250"/>
    <property type="project" value="UniProtKB"/>
</dbReference>
<dbReference type="GO" id="GO:0003729">
    <property type="term" value="F:mRNA binding"/>
    <property type="evidence" value="ECO:0000250"/>
    <property type="project" value="UniProtKB"/>
</dbReference>
<dbReference type="GO" id="GO:1990247">
    <property type="term" value="F:N6-methyladenosine-containing RNA reader activity"/>
    <property type="evidence" value="ECO:0000250"/>
    <property type="project" value="UniProtKB"/>
</dbReference>
<dbReference type="GO" id="GO:0034046">
    <property type="term" value="F:poly(G) binding"/>
    <property type="evidence" value="ECO:0000250"/>
    <property type="project" value="UniProtKB"/>
</dbReference>
<dbReference type="GO" id="GO:0008266">
    <property type="term" value="F:poly(U) RNA binding"/>
    <property type="evidence" value="ECO:0000250"/>
    <property type="project" value="UniProtKB"/>
</dbReference>
<dbReference type="GO" id="GO:0046982">
    <property type="term" value="F:protein heterodimerization activity"/>
    <property type="evidence" value="ECO:0000250"/>
    <property type="project" value="UniProtKB"/>
</dbReference>
<dbReference type="GO" id="GO:0042803">
    <property type="term" value="F:protein homodimerization activity"/>
    <property type="evidence" value="ECO:0000250"/>
    <property type="project" value="UniProtKB"/>
</dbReference>
<dbReference type="GO" id="GO:0003723">
    <property type="term" value="F:RNA binding"/>
    <property type="evidence" value="ECO:0000250"/>
    <property type="project" value="UniProtKB"/>
</dbReference>
<dbReference type="GO" id="GO:0035613">
    <property type="term" value="F:RNA stem-loop binding"/>
    <property type="evidence" value="ECO:0000250"/>
    <property type="project" value="UniProtKB"/>
</dbReference>
<dbReference type="GO" id="GO:0033592">
    <property type="term" value="F:RNA strand annealing activity"/>
    <property type="evidence" value="ECO:0000250"/>
    <property type="project" value="UniProtKB"/>
</dbReference>
<dbReference type="GO" id="GO:1990825">
    <property type="term" value="F:sequence-specific mRNA binding"/>
    <property type="evidence" value="ECO:0000250"/>
    <property type="project" value="UniProtKB"/>
</dbReference>
<dbReference type="GO" id="GO:0035197">
    <property type="term" value="F:siRNA binding"/>
    <property type="evidence" value="ECO:0000250"/>
    <property type="project" value="UniProtKB"/>
</dbReference>
<dbReference type="GO" id="GO:0045182">
    <property type="term" value="F:translation regulator activity"/>
    <property type="evidence" value="ECO:0000318"/>
    <property type="project" value="GO_Central"/>
</dbReference>
<dbReference type="GO" id="GO:0030371">
    <property type="term" value="F:translation repressor activity"/>
    <property type="evidence" value="ECO:0000250"/>
    <property type="project" value="UniProtKB"/>
</dbReference>
<dbReference type="GO" id="GO:0048513">
    <property type="term" value="P:animal organ development"/>
    <property type="evidence" value="ECO:0000318"/>
    <property type="project" value="GO_Central"/>
</dbReference>
<dbReference type="GO" id="GO:0006281">
    <property type="term" value="P:DNA repair"/>
    <property type="evidence" value="ECO:0000250"/>
    <property type="project" value="UniProtKB"/>
</dbReference>
<dbReference type="GO" id="GO:0007215">
    <property type="term" value="P:glutamate receptor signaling pathway"/>
    <property type="evidence" value="ECO:0000250"/>
    <property type="project" value="UniProtKB"/>
</dbReference>
<dbReference type="GO" id="GO:0140694">
    <property type="term" value="P:membraneless organelle assembly"/>
    <property type="evidence" value="ECO:0000250"/>
    <property type="project" value="UniProtKB"/>
</dbReference>
<dbReference type="GO" id="GO:0035195">
    <property type="term" value="P:miRNA-mediated post-transcriptional gene silencing"/>
    <property type="evidence" value="ECO:0000250"/>
    <property type="project" value="UniProtKB"/>
</dbReference>
<dbReference type="GO" id="GO:0006406">
    <property type="term" value="P:mRNA export from nucleus"/>
    <property type="evidence" value="ECO:0000250"/>
    <property type="project" value="UniProtKB"/>
</dbReference>
<dbReference type="GO" id="GO:0006397">
    <property type="term" value="P:mRNA processing"/>
    <property type="evidence" value="ECO:0007669"/>
    <property type="project" value="UniProtKB-KW"/>
</dbReference>
<dbReference type="GO" id="GO:0051028">
    <property type="term" value="P:mRNA transport"/>
    <property type="evidence" value="ECO:0000250"/>
    <property type="project" value="UniProtKB"/>
</dbReference>
<dbReference type="GO" id="GO:2000766">
    <property type="term" value="P:negative regulation of cytoplasmic translation"/>
    <property type="evidence" value="ECO:0000250"/>
    <property type="project" value="UniProtKB"/>
</dbReference>
<dbReference type="GO" id="GO:0010629">
    <property type="term" value="P:negative regulation of gene expression"/>
    <property type="evidence" value="ECO:0000250"/>
    <property type="project" value="UniProtKB"/>
</dbReference>
<dbReference type="GO" id="GO:1900453">
    <property type="term" value="P:negative regulation of long-term synaptic depression"/>
    <property type="evidence" value="ECO:0000250"/>
    <property type="project" value="UniProtKB"/>
</dbReference>
<dbReference type="GO" id="GO:0060965">
    <property type="term" value="P:negative regulation of miRNA-mediated gene silencing"/>
    <property type="evidence" value="ECO:0000250"/>
    <property type="project" value="UniProtKB"/>
</dbReference>
<dbReference type="GO" id="GO:2000301">
    <property type="term" value="P:negative regulation of synaptic vesicle exocytosis"/>
    <property type="evidence" value="ECO:0000250"/>
    <property type="project" value="UniProtKB"/>
</dbReference>
<dbReference type="GO" id="GO:0017148">
    <property type="term" value="P:negative regulation of translation"/>
    <property type="evidence" value="ECO:0000250"/>
    <property type="project" value="UniProtKB"/>
</dbReference>
<dbReference type="GO" id="GO:0045947">
    <property type="term" value="P:negative regulation of translational initiation"/>
    <property type="evidence" value="ECO:0000250"/>
    <property type="project" value="UniProtKB"/>
</dbReference>
<dbReference type="GO" id="GO:1901386">
    <property type="term" value="P:negative regulation of voltage-gated calcium channel activity"/>
    <property type="evidence" value="ECO:0000250"/>
    <property type="project" value="UniProtKB"/>
</dbReference>
<dbReference type="GO" id="GO:0007399">
    <property type="term" value="P:nervous system development"/>
    <property type="evidence" value="ECO:0007669"/>
    <property type="project" value="UniProtKB-KW"/>
</dbReference>
<dbReference type="GO" id="GO:0060999">
    <property type="term" value="P:positive regulation of dendritic spine development"/>
    <property type="evidence" value="ECO:0000250"/>
    <property type="project" value="UniProtKB"/>
</dbReference>
<dbReference type="GO" id="GO:0051491">
    <property type="term" value="P:positive regulation of filopodium assembly"/>
    <property type="evidence" value="ECO:0000250"/>
    <property type="project" value="UniProtKB"/>
</dbReference>
<dbReference type="GO" id="GO:0048170">
    <property type="term" value="P:positive regulation of long-term neuronal synaptic plasticity"/>
    <property type="evidence" value="ECO:0000318"/>
    <property type="project" value="GO_Central"/>
</dbReference>
<dbReference type="GO" id="GO:2000637">
    <property type="term" value="P:positive regulation of miRNA-mediated gene silencing"/>
    <property type="evidence" value="ECO:0000250"/>
    <property type="project" value="UniProtKB"/>
</dbReference>
<dbReference type="GO" id="GO:1901800">
    <property type="term" value="P:positive regulation of proteasomal protein catabolic process"/>
    <property type="evidence" value="ECO:0000250"/>
    <property type="project" value="UniProtKB"/>
</dbReference>
<dbReference type="GO" id="GO:0002092">
    <property type="term" value="P:positive regulation of receptor internalization"/>
    <property type="evidence" value="ECO:0000250"/>
    <property type="project" value="UniProtKB"/>
</dbReference>
<dbReference type="GO" id="GO:0045727">
    <property type="term" value="P:positive regulation of translation"/>
    <property type="evidence" value="ECO:0000250"/>
    <property type="project" value="UniProtKB"/>
</dbReference>
<dbReference type="GO" id="GO:0000381">
    <property type="term" value="P:regulation of alternative mRNA splicing, via spliceosome"/>
    <property type="evidence" value="ECO:0000250"/>
    <property type="project" value="UniProtKB"/>
</dbReference>
<dbReference type="GO" id="GO:0060998">
    <property type="term" value="P:regulation of dendritic spine development"/>
    <property type="evidence" value="ECO:0000250"/>
    <property type="project" value="UniProtKB"/>
</dbReference>
<dbReference type="GO" id="GO:0051489">
    <property type="term" value="P:regulation of filopodium assembly"/>
    <property type="evidence" value="ECO:0000250"/>
    <property type="project" value="UniProtKB"/>
</dbReference>
<dbReference type="GO" id="GO:0043488">
    <property type="term" value="P:regulation of mRNA stability"/>
    <property type="evidence" value="ECO:0000250"/>
    <property type="project" value="UniProtKB"/>
</dbReference>
<dbReference type="GO" id="GO:0098908">
    <property type="term" value="P:regulation of neuronal action potential"/>
    <property type="evidence" value="ECO:0000250"/>
    <property type="project" value="UniProtKB"/>
</dbReference>
<dbReference type="GO" id="GO:0046928">
    <property type="term" value="P:regulation of neurotransmitter secretion"/>
    <property type="evidence" value="ECO:0000250"/>
    <property type="project" value="UniProtKB"/>
</dbReference>
<dbReference type="GO" id="GO:0099577">
    <property type="term" value="P:regulation of translation at presynapse, modulating synaptic transmission"/>
    <property type="evidence" value="ECO:0000318"/>
    <property type="project" value="GO_Central"/>
</dbReference>
<dbReference type="GO" id="GO:0008380">
    <property type="term" value="P:RNA splicing"/>
    <property type="evidence" value="ECO:0007669"/>
    <property type="project" value="UniProtKB-KW"/>
</dbReference>
<dbReference type="GO" id="GO:0060538">
    <property type="term" value="P:skeletal muscle organ development"/>
    <property type="evidence" value="ECO:0000250"/>
    <property type="project" value="UniProtKB"/>
</dbReference>
<dbReference type="GO" id="GO:0034063">
    <property type="term" value="P:stress granule assembly"/>
    <property type="evidence" value="ECO:0000250"/>
    <property type="project" value="UniProtKB"/>
</dbReference>
<dbReference type="CDD" id="cd22506">
    <property type="entry name" value="KH_I_FMR1_rpt1"/>
    <property type="match status" value="1"/>
</dbReference>
<dbReference type="CDD" id="cd22509">
    <property type="entry name" value="KH_I_FMR1_rpt2"/>
    <property type="match status" value="1"/>
</dbReference>
<dbReference type="CDD" id="cd22512">
    <property type="entry name" value="KH_I_FMR1_rpt3"/>
    <property type="match status" value="1"/>
</dbReference>
<dbReference type="CDD" id="cd20471">
    <property type="entry name" value="Tudor_Agenet_FMR1_rpt1"/>
    <property type="match status" value="1"/>
</dbReference>
<dbReference type="CDD" id="cd20474">
    <property type="entry name" value="Tudor_Agenet_FMR1_rpt2"/>
    <property type="match status" value="1"/>
</dbReference>
<dbReference type="FunFam" id="2.30.30.140:FF:000001">
    <property type="entry name" value="Fragile X mental retardation 1, isoform CRA_e"/>
    <property type="match status" value="1"/>
</dbReference>
<dbReference type="FunFam" id="2.30.30.140:FF:000002">
    <property type="entry name" value="Fragile X mental retardation 1, isoform CRA_e"/>
    <property type="match status" value="1"/>
</dbReference>
<dbReference type="FunFam" id="3.30.1370.10:FF:000004">
    <property type="entry name" value="Fragile X mental retardation 1, isoform CRA_e"/>
    <property type="match status" value="1"/>
</dbReference>
<dbReference type="FunFam" id="3.30.1370.10:FF:000054">
    <property type="entry name" value="Fragile X mental retardation protein 1"/>
    <property type="match status" value="1"/>
</dbReference>
<dbReference type="Gene3D" id="2.30.30.140">
    <property type="match status" value="2"/>
</dbReference>
<dbReference type="Gene3D" id="3.30.1370.10">
    <property type="entry name" value="K Homology domain, type 1"/>
    <property type="match status" value="2"/>
</dbReference>
<dbReference type="InterPro" id="IPR008395">
    <property type="entry name" value="Agenet-like_dom"/>
</dbReference>
<dbReference type="InterPro" id="IPR040148">
    <property type="entry name" value="FMR1"/>
</dbReference>
<dbReference type="InterPro" id="IPR022034">
    <property type="entry name" value="FMR1-like_C_core"/>
</dbReference>
<dbReference type="InterPro" id="IPR032196">
    <property type="entry name" value="FMR1_C2"/>
</dbReference>
<dbReference type="InterPro" id="IPR040472">
    <property type="entry name" value="FMRP_KH0"/>
</dbReference>
<dbReference type="InterPro" id="IPR004087">
    <property type="entry name" value="KH_dom"/>
</dbReference>
<dbReference type="InterPro" id="IPR004088">
    <property type="entry name" value="KH_dom_type_1"/>
</dbReference>
<dbReference type="InterPro" id="IPR036612">
    <property type="entry name" value="KH_dom_type_1_sf"/>
</dbReference>
<dbReference type="InterPro" id="IPR047438">
    <property type="entry name" value="KH_I_FMR1_rpt1"/>
</dbReference>
<dbReference type="InterPro" id="IPR047440">
    <property type="entry name" value="KH_I_FMR1_rpt2"/>
</dbReference>
<dbReference type="InterPro" id="IPR047431">
    <property type="entry name" value="Tudor_Agenet_FMR1_rpt1"/>
</dbReference>
<dbReference type="InterPro" id="IPR047436">
    <property type="entry name" value="Tudor_Agenet_FMR1_rpt2"/>
</dbReference>
<dbReference type="InterPro" id="IPR041560">
    <property type="entry name" value="Tudor_FRM1"/>
</dbReference>
<dbReference type="PANTHER" id="PTHR10603">
    <property type="entry name" value="FRAGILE X MENTAL RETARDATION SYNDROME-RELATED PROTEIN"/>
    <property type="match status" value="1"/>
</dbReference>
<dbReference type="PANTHER" id="PTHR10603:SF4">
    <property type="entry name" value="FRAGILE X MESSENGER RIBONUCLEOPROTEIN 1"/>
    <property type="match status" value="1"/>
</dbReference>
<dbReference type="Pfam" id="PF05641">
    <property type="entry name" value="Agenet"/>
    <property type="match status" value="1"/>
</dbReference>
<dbReference type="Pfam" id="PF16098">
    <property type="entry name" value="FXMR_C2"/>
    <property type="match status" value="1"/>
</dbReference>
<dbReference type="Pfam" id="PF12235">
    <property type="entry name" value="FXMRP1_C_core"/>
    <property type="match status" value="1"/>
</dbReference>
<dbReference type="Pfam" id="PF00013">
    <property type="entry name" value="KH_1"/>
    <property type="match status" value="2"/>
</dbReference>
<dbReference type="Pfam" id="PF17904">
    <property type="entry name" value="KH_9"/>
    <property type="match status" value="1"/>
</dbReference>
<dbReference type="Pfam" id="PF18336">
    <property type="entry name" value="Tudor_FRX1"/>
    <property type="match status" value="1"/>
</dbReference>
<dbReference type="SMART" id="SM00322">
    <property type="entry name" value="KH"/>
    <property type="match status" value="2"/>
</dbReference>
<dbReference type="SUPFAM" id="SSF54791">
    <property type="entry name" value="Eukaryotic type KH-domain (KH-domain type I)"/>
    <property type="match status" value="2"/>
</dbReference>
<dbReference type="PROSITE" id="PS51641">
    <property type="entry name" value="AGENET_LIKE"/>
    <property type="match status" value="2"/>
</dbReference>
<dbReference type="PROSITE" id="PS50084">
    <property type="entry name" value="KH_TYPE_1"/>
    <property type="match status" value="2"/>
</dbReference>
<keyword id="KW-1003">Cell membrane</keyword>
<keyword id="KW-0966">Cell projection</keyword>
<keyword id="KW-0137">Centromere</keyword>
<keyword id="KW-0158">Chromosome</keyword>
<keyword id="KW-0963">Cytoplasm</keyword>
<keyword id="KW-0472">Membrane</keyword>
<keyword id="KW-0507">mRNA processing</keyword>
<keyword id="KW-0508">mRNA splicing</keyword>
<keyword id="KW-0509">mRNA transport</keyword>
<keyword id="KW-0524">Neurogenesis</keyword>
<keyword id="KW-0539">Nucleus</keyword>
<keyword id="KW-0628">Postsynaptic cell membrane</keyword>
<keyword id="KW-1185">Reference proteome</keyword>
<keyword id="KW-0677">Repeat</keyword>
<keyword id="KW-0678">Repressor</keyword>
<keyword id="KW-0687">Ribonucleoprotein</keyword>
<keyword id="KW-0694">RNA-binding</keyword>
<keyword id="KW-0770">Synapse</keyword>
<keyword id="KW-0771">Synaptosome</keyword>
<keyword id="KW-0810">Translation regulation</keyword>
<keyword id="KW-0813">Transport</keyword>
<comment type="function">
    <text evidence="2 3">Multifunctional polyribosome-associated RNA-binding protein that plays a central role in neuronal development and synaptic plasticity through the regulation of alternative mRNA splicing, mRNA stability, mRNA dendritic transport and postsynaptic local protein synthesis of target mRNAs. Acts as an mRNA regulator by mediating formation of some phase-separated membraneless compartment: undergoes liquid-liquid phase separation upon binding to target mRNAs, leading to assemble mRNAs into cytoplasmic ribonucleoprotein granules that concentrate mRNAs with associated regulatory factors (By similarity). Binds poly(G) and poly(U), and to a lower extent poly(A) and poly(C) (By similarity). Forms a cytoplasmic messenger ribonucleoprotein (mRNP) network by packaging long mRNAs, serving as a scaffold that recruits proteins and signaling molecules. This network facilitates signaling reactions by maintaining proximity between kinases and substrates (By similarity).</text>
</comment>
<comment type="subunit">
    <text evidence="3">Homodimer. Heterodimer.</text>
</comment>
<comment type="subcellular location">
    <subcellularLocation>
        <location evidence="3">Nucleus</location>
    </subcellularLocation>
    <subcellularLocation>
        <location evidence="3">Nucleus</location>
        <location evidence="3">Nucleolus</location>
    </subcellularLocation>
    <subcellularLocation>
        <location evidence="1">Chromosome</location>
        <location evidence="1">Centromere</location>
    </subcellularLocation>
    <subcellularLocation>
        <location evidence="1">Chromosome</location>
    </subcellularLocation>
    <subcellularLocation>
        <location evidence="3">Cytoplasm</location>
        <location evidence="3">Perinuclear region</location>
    </subcellularLocation>
    <subcellularLocation>
        <location evidence="3">Cytoplasm</location>
        <location evidence="3">Cytoplasmic ribonucleoprotein granule</location>
    </subcellularLocation>
    <subcellularLocation>
        <location evidence="3">Cytoplasm</location>
        <location evidence="3">Stress granule</location>
    </subcellularLocation>
    <subcellularLocation>
        <location evidence="3">Perikaryon</location>
    </subcellularLocation>
    <subcellularLocation>
        <location evidence="3">Cell projection</location>
        <location evidence="3">Neuron projection</location>
    </subcellularLocation>
    <subcellularLocation>
        <location evidence="1">Cell projection</location>
        <location evidence="1">Axon</location>
    </subcellularLocation>
    <subcellularLocation>
        <location evidence="1">Cell projection</location>
        <location evidence="1">Dendrite</location>
    </subcellularLocation>
    <subcellularLocation>
        <location evidence="1">Cell projection</location>
        <location evidence="1">Dendritic spine</location>
    </subcellularLocation>
    <subcellularLocation>
        <location evidence="1">Synapse</location>
        <location evidence="1">Synaptosome</location>
    </subcellularLocation>
    <subcellularLocation>
        <location evidence="3">Cell projection</location>
        <location evidence="3">Growth cone</location>
    </subcellularLocation>
    <subcellularLocation>
        <location evidence="1">Cell projection</location>
        <location evidence="1">Filopodium tip</location>
    </subcellularLocation>
    <subcellularLocation>
        <location evidence="1">Synapse</location>
    </subcellularLocation>
    <subcellularLocation>
        <location evidence="1">Postsynaptic cell membrane</location>
    </subcellularLocation>
    <subcellularLocation>
        <location evidence="1">Presynaptic cell membrane</location>
    </subcellularLocation>
    <subcellularLocation>
        <location evidence="1">Cell membrane</location>
    </subcellularLocation>
</comment>
<comment type="domain">
    <text evidence="3">The C-terminal disordered region undergoes liquid-liquid phase separation (LLPS) for the formation of a membraneless compartment that concentrates mRNAs with associated regulatory factors.</text>
</comment>
<comment type="similarity">
    <text evidence="8">Belongs to the FMR1 family.</text>
</comment>
<reference evidence="9" key="1">
    <citation type="submission" date="2006-02" db="EMBL/GenBank/DDBJ databases">
        <authorList>
            <consortium name="NIH - Xenopus Gene Collection (XGC) project"/>
        </authorList>
    </citation>
    <scope>NUCLEOTIDE SEQUENCE [LARGE SCALE MRNA]</scope>
    <source>
        <tissue evidence="9">Eye</tissue>
    </source>
</reference>
<sequence>MEELAVEVRGSNGAFYKAFVKDVHEDSITVTFENNWQQEKQIPFHDVRFPPPSGYNKDINESDEVEVYSRANEKEPCCWWLAKVRMIKGEFYVIEYAACDATYNEIVTIDRLRSVNPNKSATKNSFHKVKLDVPEDLRQMCAKDSAHKDFKKAVGAFSVSYDSENYQLVILSVNEVTIKRANMLCDMHFRSLRTKLSLMLRNEEASKQLESSRQLASRFHEQFIVREDLMGLAIGTHGANIQQARKVPGVTAIDLDEDTCTFHIYGEDQEAVKKARTYLEFAEDVIQVPRNLVGKVIGKNGKLIQEIVDKSGVVRVRIEAENDKNISQEEGNVPFVFVGTKDSITNATVLLDYHLNYLKEVDQLRLERLQIDEQLRQIGASSRPPSNRPDKEKGYLSEDCSGTVRGSRPYNNRGRSRRGTGYASGTNSEASNASETESDHRDELSDWSLAPAEDDRDNYHRRGDGRRRGGMRGQGMRGRGGFKGNDDQPRPDNRQRNSRETKARTSDGSLQIRIDCNNERSVHTKTLQNASVEGSRLRTGKDRIQKKEKTDGVDGPQVVVNGVP</sequence>